<protein>
    <recommendedName>
        <fullName>Kappa-casein</fullName>
        <shortName>Kappa-CN</shortName>
    </recommendedName>
</protein>
<organism>
    <name type="scientific">Capra hircus</name>
    <name type="common">Goat</name>
    <dbReference type="NCBI Taxonomy" id="9925"/>
    <lineage>
        <taxon>Eukaryota</taxon>
        <taxon>Metazoa</taxon>
        <taxon>Chordata</taxon>
        <taxon>Craniata</taxon>
        <taxon>Vertebrata</taxon>
        <taxon>Euteleostomi</taxon>
        <taxon>Mammalia</taxon>
        <taxon>Eutheria</taxon>
        <taxon>Laurasiatheria</taxon>
        <taxon>Artiodactyla</taxon>
        <taxon>Ruminantia</taxon>
        <taxon>Pecora</taxon>
        <taxon>Bovidae</taxon>
        <taxon>Caprinae</taxon>
        <taxon>Capra</taxon>
    </lineage>
</organism>
<gene>
    <name type="primary">CSN3</name>
    <name type="synonym">CSN10</name>
    <name type="synonym">CSNK</name>
</gene>
<comment type="function">
    <text>Kappa-casein stabilizes micelle formation, preventing casein precipitation in milk.</text>
</comment>
<comment type="subcellular location">
    <subcellularLocation>
        <location>Secreted</location>
    </subcellularLocation>
</comment>
<comment type="tissue specificity">
    <text>Mammary gland specific. Secreted in milk.</text>
</comment>
<comment type="similarity">
    <text evidence="10">Belongs to the kappa-casein family.</text>
</comment>
<keyword id="KW-0903">Direct protein sequencing</keyword>
<keyword id="KW-0325">Glycoprotein</keyword>
<keyword id="KW-0494">Milk protein</keyword>
<keyword id="KW-0597">Phosphoprotein</keyword>
<keyword id="KW-0873">Pyrrolidone carboxylic acid</keyword>
<keyword id="KW-1185">Reference proteome</keyword>
<keyword id="KW-0964">Secreted</keyword>
<keyword id="KW-0732">Signal</keyword>
<accession>P02670</accession>
<accession>Q8SPM9</accession>
<accession>Q8SPN0</accession>
<accession>Q8SPV1</accession>
<accession>Q8SPW6</accession>
<accession>Q8SPW7</accession>
<accession>Q8SPW8</accession>
<accession>Q8WMV5</accession>
<accession>Q8WN74</accession>
<evidence type="ECO:0000250" key="1">
    <source>
        <dbReference type="UniProtKB" id="P02668"/>
    </source>
</evidence>
<evidence type="ECO:0000256" key="2">
    <source>
        <dbReference type="SAM" id="MobiDB-lite"/>
    </source>
</evidence>
<evidence type="ECO:0000269" key="3">
    <source>
    </source>
</evidence>
<evidence type="ECO:0000269" key="4">
    <source>
    </source>
</evidence>
<evidence type="ECO:0000269" key="5">
    <source>
    </source>
</evidence>
<evidence type="ECO:0000269" key="6">
    <source>
    </source>
</evidence>
<evidence type="ECO:0000269" key="7">
    <source ref="6"/>
</evidence>
<evidence type="ECO:0000269" key="8">
    <source ref="7"/>
</evidence>
<evidence type="ECO:0000269" key="9">
    <source ref="8"/>
</evidence>
<evidence type="ECO:0000305" key="10"/>
<sequence>MMKSFFLVVTILALTLPFLGAQEQNQEQPICCEKDERFFDDKIAKYIPIQYVLSRYPSYGLNYYQQRPVALINNQFLPYPYYAKPVAVRSPAQTLQWQVLPNTVPAKSCQDQPTTLARHPHPHLSFMAIPPKKDQDKTEVPAINTIASAEPTVHSTPTTEAIVNTVDNPEASSESIASASETNTAQVTSTEV</sequence>
<dbReference type="EMBL" id="D14373">
    <property type="protein sequence ID" value="BAA03286.1"/>
    <property type="molecule type" value="Genomic_DNA"/>
</dbReference>
<dbReference type="EMBL" id="X60763">
    <property type="protein sequence ID" value="CAA43174.1"/>
    <property type="molecule type" value="mRNA"/>
</dbReference>
<dbReference type="EMBL" id="AY027868">
    <property type="protein sequence ID" value="AAK17010.1"/>
    <property type="molecule type" value="Genomic_DNA"/>
</dbReference>
<dbReference type="EMBL" id="AF485339">
    <property type="protein sequence ID" value="AAL90871.1"/>
    <property type="molecule type" value="Genomic_DNA"/>
</dbReference>
<dbReference type="EMBL" id="AF485340">
    <property type="protein sequence ID" value="AAL90872.1"/>
    <property type="molecule type" value="Genomic_DNA"/>
</dbReference>
<dbReference type="EMBL" id="AF485341">
    <property type="protein sequence ID" value="AAL90873.1"/>
    <property type="molecule type" value="Genomic_DNA"/>
</dbReference>
<dbReference type="EMBL" id="AF486523">
    <property type="protein sequence ID" value="AAL93193.1"/>
    <property type="molecule type" value="Genomic_DNA"/>
</dbReference>
<dbReference type="EMBL" id="AY090465">
    <property type="protein sequence ID" value="AAM12025.1"/>
    <property type="molecule type" value="Genomic_DNA"/>
</dbReference>
<dbReference type="EMBL" id="AY090466">
    <property type="protein sequence ID" value="AAM12026.1"/>
    <property type="molecule type" value="Genomic_DNA"/>
</dbReference>
<dbReference type="EMBL" id="AY090467">
    <property type="protein sequence ID" value="AAM12027.1"/>
    <property type="molecule type" value="Genomic_DNA"/>
</dbReference>
<dbReference type="EMBL" id="AF434988">
    <property type="protein sequence ID" value="AAL31535.1"/>
    <property type="molecule type" value="Genomic_DNA"/>
</dbReference>
<dbReference type="PIR" id="A94479">
    <property type="entry name" value="KKGT"/>
</dbReference>
<dbReference type="PIR" id="S15513">
    <property type="entry name" value="S15513"/>
</dbReference>
<dbReference type="RefSeq" id="NP_001272516.1">
    <property type="nucleotide sequence ID" value="NM_001285587.1"/>
</dbReference>
<dbReference type="STRING" id="9925.ENSCHIP00000033244"/>
<dbReference type="Allergome" id="1242">
    <property type="allergen name" value="Cap h 8"/>
</dbReference>
<dbReference type="Allergome" id="2969">
    <property type="allergen name" value="Cap h 12"/>
</dbReference>
<dbReference type="GlyCosmos" id="P02670">
    <property type="glycosylation" value="7 sites, No reported glycans"/>
</dbReference>
<dbReference type="iPTMnet" id="P02670"/>
<dbReference type="GeneID" id="100861231"/>
<dbReference type="KEGG" id="chx:100861231"/>
<dbReference type="CTD" id="1448"/>
<dbReference type="OrthoDB" id="9836334at2759"/>
<dbReference type="Proteomes" id="UP000291000">
    <property type="component" value="Unassembled WGS sequence"/>
</dbReference>
<dbReference type="Proteomes" id="UP000694566">
    <property type="component" value="Unplaced"/>
</dbReference>
<dbReference type="GO" id="GO:0005615">
    <property type="term" value="C:extracellular space"/>
    <property type="evidence" value="ECO:0007669"/>
    <property type="project" value="TreeGrafter"/>
</dbReference>
<dbReference type="GO" id="GO:0007595">
    <property type="term" value="P:lactation"/>
    <property type="evidence" value="ECO:0007669"/>
    <property type="project" value="TreeGrafter"/>
</dbReference>
<dbReference type="GO" id="GO:0050821">
    <property type="term" value="P:protein stabilization"/>
    <property type="evidence" value="ECO:0007669"/>
    <property type="project" value="TreeGrafter"/>
</dbReference>
<dbReference type="InterPro" id="IPR000117">
    <property type="entry name" value="Casein_kappa"/>
</dbReference>
<dbReference type="PANTHER" id="PTHR11470">
    <property type="entry name" value="KAPPA CASEIN"/>
    <property type="match status" value="1"/>
</dbReference>
<dbReference type="PANTHER" id="PTHR11470:SF2">
    <property type="entry name" value="KAPPA-CASEIN"/>
    <property type="match status" value="1"/>
</dbReference>
<dbReference type="Pfam" id="PF00997">
    <property type="entry name" value="Casein_kappa"/>
    <property type="match status" value="1"/>
</dbReference>
<dbReference type="PIRSF" id="PIRSF002374">
    <property type="entry name" value="Casein_kappa"/>
    <property type="match status" value="1"/>
</dbReference>
<name>CASK_CAPHI</name>
<reference key="1">
    <citation type="journal article" date="1993" name="J. Anim. Sci.">
        <title>Nucleotide sequence of the goat kappa-casein cDNA.</title>
        <authorList>
            <person name="Coll A."/>
            <person name="Folch J.M."/>
            <person name="Sanchez A."/>
        </authorList>
    </citation>
    <scope>NUCLEOTIDE SEQUENCE [MRNA]</scope>
    <source>
        <strain>Ssp. aegagrus</strain>
        <tissue>Mammary gland</tissue>
    </source>
</reference>
<reference key="2">
    <citation type="journal article" date="1995" name="J. Mol. Evol.">
        <title>Molecular phylogeny based on the kappa-casein and cytochrome b sequences in the mammalian suborder ruminantia.</title>
        <authorList>
            <person name="Chikuni K."/>
            <person name="Mori Y."/>
            <person name="Tabata T."/>
            <person name="Saito M."/>
            <person name="Monma M."/>
            <person name="Kosugiyama M."/>
        </authorList>
    </citation>
    <scope>NUCLEOTIDE SEQUENCE [GENOMIC DNA]</scope>
</reference>
<reference key="3">
    <citation type="journal article" date="1976" name="FEBS Lett.">
        <title>Comparative study of the amino acid sequences of the caseinomacropeptides from seven species.</title>
        <authorList>
            <person name="Mercier J.-C."/>
            <person name="Chobert J.-M."/>
            <person name="Addeo F."/>
        </authorList>
    </citation>
    <scope>PROTEIN SEQUENCE OF 22-192</scope>
    <scope>PYROGLUTAMATE FORMATION AT GLN-22</scope>
</reference>
<reference key="4">
    <citation type="journal article" date="2001" name="Anim. Genet.">
        <title>Genetic polymorphism of goat kappa-casein (CSN3) in different breeds and characterization at DNA level.</title>
        <authorList>
            <person name="Caroli A."/>
            <person name="Jann O."/>
            <person name="Budelli E."/>
            <person name="Bolla P."/>
            <person name="Jaeger S."/>
            <person name="Erhardt G."/>
        </authorList>
    </citation>
    <scope>NUCLEOTIDE SEQUENCE [GENOMIC DNA] OF 31-192</scope>
    <scope>VARIANTS ARG-65; ILE-86; ILE-140 AND PRO-180</scope>
</reference>
<reference key="5">
    <citation type="journal article" date="2001" name="J. Dairy Res.">
        <title>Genetic polymorphism of the caprine kappa casein gene.</title>
        <authorList>
            <person name="Yahyaoui M.H."/>
            <person name="Coll A."/>
            <person name="Sanchez A."/>
            <person name="Folch J.M."/>
        </authorList>
    </citation>
    <scope>NUCLEOTIDE SEQUENCE OF 31-192</scope>
    <scope>VARIANTS ILE-86; ILE-140; VAL-177 AND PRO-180</scope>
</reference>
<reference key="6">
    <citation type="submission" date="2002-02" db="EMBL/GenBank/DDBJ databases">
        <title>Characterization of a new genetic variant in the caprine k-casein gene.</title>
        <authorList>
            <person name="Angiolillo A."/>
            <person name="Yahyaoui M.H."/>
            <person name="Sanchez A."/>
            <person name="Pilla F."/>
            <person name="Folch J.M."/>
        </authorList>
    </citation>
    <scope>NUCLEOTIDE SEQUENCE OF 31-192</scope>
    <scope>VARIANTS GLY-111 AND ILE-140</scope>
</reference>
<reference key="7">
    <citation type="submission" date="2002-03" db="EMBL/GenBank/DDBJ databases">
        <title>Characterization of new genetic variants and genotyping of the caprine kappa casein gene.</title>
        <authorList>
            <person name="Yahyaoui M.H."/>
            <person name="Sanchez A."/>
            <person name="Folch J.M."/>
        </authorList>
    </citation>
    <scope>NUCLEOTIDE SEQUENCE OF 31-192</scope>
    <scope>VARIANTS ARG-65; ILE-86; ILE-140 AND PRO-180</scope>
</reference>
<reference key="8">
    <citation type="journal article" date="2002" name="Food Technol. Biotechnol.">
        <title>Polymorphism of kappa-casein in Italian goat breeds: a new ACRS-PCR designed DNA test for discrimination of A and B alleles.</title>
        <authorList>
            <person name="Feligini M."/>
            <person name="Cubric-Curik V."/>
            <person name="Parma P."/>
            <person name="Curik I."/>
            <person name="Greppi G."/>
            <person name="Enne G."/>
        </authorList>
    </citation>
    <scope>NUCLEOTIDE SEQUENCE OF 31-189</scope>
    <scope>VARIANT ILE-140</scope>
</reference>
<reference key="9">
    <citation type="journal article" date="1976" name="Biochimie">
        <title>Primary structure of the casein macropeptide of caprine kappa casein.</title>
        <authorList>
            <person name="Mercier J.-C."/>
            <person name="Addeo F."/>
            <person name="Pelissier J.-P."/>
        </authorList>
    </citation>
    <scope>PROTEIN SEQUENCE OF 127-192</scope>
    <scope>PHOSPHORYLATION AT SER-172 AND SER-189</scope>
</reference>
<feature type="signal peptide" evidence="6">
    <location>
        <begin position="1"/>
        <end position="21"/>
    </location>
</feature>
<feature type="chain" id="PRO_0000004492" description="Kappa-casein">
    <location>
        <begin position="22"/>
        <end position="192"/>
    </location>
</feature>
<feature type="region of interest" description="Disordered" evidence="2">
    <location>
        <begin position="167"/>
        <end position="192"/>
    </location>
</feature>
<feature type="compositionally biased region" description="Low complexity" evidence="2">
    <location>
        <begin position="170"/>
        <end position="181"/>
    </location>
</feature>
<feature type="compositionally biased region" description="Polar residues" evidence="2">
    <location>
        <begin position="182"/>
        <end position="192"/>
    </location>
</feature>
<feature type="site" description="Cleavage; by chymosin/rennin">
    <location>
        <begin position="126"/>
        <end position="127"/>
    </location>
</feature>
<feature type="modified residue" description="Pyrrolidone carboxylic acid" evidence="6">
    <location>
        <position position="22"/>
    </location>
</feature>
<feature type="modified residue" description="Phosphoserine" evidence="1">
    <location>
        <position position="148"/>
    </location>
</feature>
<feature type="modified residue" description="Phosphoserine; alternate" evidence="3">
    <location>
        <position position="172"/>
    </location>
</feature>
<feature type="modified residue" description="Phosphoserine" evidence="3">
    <location>
        <position position="189"/>
    </location>
</feature>
<feature type="glycosylation site" description="O-linked (GalNAc...) threonine" evidence="1">
    <location>
        <position position="152"/>
    </location>
</feature>
<feature type="glycosylation site" description="O-linked (GalNAc...) serine" evidence="1">
    <location>
        <position position="155"/>
    </location>
</feature>
<feature type="glycosylation site" description="O-linked (GalNAc...) threonine" evidence="1">
    <location>
        <position position="156"/>
    </location>
</feature>
<feature type="glycosylation site" description="O-linked (GalNAc...) threonine" evidence="1">
    <location>
        <position position="159"/>
    </location>
</feature>
<feature type="glycosylation site" description="O-linked (GalNAc...) threonine" evidence="1">
    <location>
        <position position="165"/>
    </location>
</feature>
<feature type="glycosylation site" description="O-linked (GalNAc...) serine; alternate" evidence="1">
    <location>
        <position position="172"/>
    </location>
</feature>
<feature type="glycosylation site" description="O-linked (GalNAc...) threonine" evidence="1">
    <location>
        <position position="188"/>
    </location>
</feature>
<feature type="sequence variant" description="In allele CSN3-B." evidence="5 8">
    <original>Q</original>
    <variation>R</variation>
    <location>
        <position position="65"/>
    </location>
</feature>
<feature type="sequence variant" description="In allele CSN3-B, allele C and allele G." evidence="4 5 8">
    <original>V</original>
    <variation>I</variation>
    <location>
        <position position="86"/>
    </location>
</feature>
<feature type="sequence variant" description="In allele E." evidence="7">
    <original>D</original>
    <variation>G</variation>
    <location>
        <position position="111"/>
    </location>
</feature>
<feature type="sequence variant" description="In allele CSN3-B, allele B, allele C, allele E, allele F and allele G." evidence="4 5 7 8 9">
    <original>V</original>
    <variation>I</variation>
    <location>
        <position position="140"/>
    </location>
</feature>
<feature type="sequence variant" description="In allele C." evidence="4">
    <original>A</original>
    <variation>V</variation>
    <location>
        <position position="177"/>
    </location>
</feature>
<feature type="sequence variant" description="In allele CSN3-B, allele C, allele F and allele G." evidence="4 5 8">
    <original>S</original>
    <variation>P</variation>
    <location>
        <position position="180"/>
    </location>
</feature>
<feature type="sequence conflict" description="In Ref. 3; AA sequence." evidence="10" ref="3">
    <original>D</original>
    <variation>N</variation>
    <location>
        <position position="134"/>
    </location>
</feature>
<proteinExistence type="evidence at protein level"/>